<proteinExistence type="evidence at protein level"/>
<protein>
    <recommendedName>
        <fullName evidence="7">Serotype-specific mannosyltransferase WbdA</fullName>
        <ecNumber evidence="2 3 5">2.4.1.371</ecNumber>
    </recommendedName>
    <alternativeName>
        <fullName evidence="7">Bifunctional alpha-(1-&gt;2), alpha-(1-&gt;3)-mannosyltransferase</fullName>
    </alternativeName>
    <alternativeName>
        <fullName evidence="8">O-antigen chain mannosyltransferase A</fullName>
    </alternativeName>
    <alternativeName>
        <fullName evidence="8">Polymannosyl GlcNAc-diphospho-ditrans,octacis-undecaprenol 2,3-alpha-mannosylpolymerase</fullName>
    </alternativeName>
    <domain>
        <recommendedName>
            <fullName evidence="8">alpha-(1-&gt;2)-mannosyltransferase</fullName>
        </recommendedName>
    </domain>
    <domain>
        <recommendedName>
            <fullName evidence="8">alpha-(1-&gt;3)-mannosyltransferase</fullName>
        </recommendedName>
    </domain>
</protein>
<organism>
    <name type="scientific">Escherichia coli</name>
    <dbReference type="NCBI Taxonomy" id="562"/>
    <lineage>
        <taxon>Bacteria</taxon>
        <taxon>Pseudomonadati</taxon>
        <taxon>Pseudomonadota</taxon>
        <taxon>Gammaproteobacteria</taxon>
        <taxon>Enterobacterales</taxon>
        <taxon>Enterobacteriaceae</taxon>
        <taxon>Escherichia</taxon>
    </lineage>
</organism>
<sequence length="840" mass="94195">MHILIDVQGYQSESKVRGIGRSTPAMSRAIIENAGEHRVSILINGMYPIDNINDVKMAYRDLLTDEDMFIFSAVAPTAYRHIENHGRSKAAQAARDIAIANIAPDIVYVISFFEGHSDSYTVSIPADNVPWKTVCVCHDLIPLLNKERYLGDPNFREFYMNKLAEFERADAIFAISQSAAQEVIEYTDIASDRVLNISSAVGEEFAVIDYSAERIQSLKDKYSLPDEFILSLAMIEPRKNIEALIHAYSLLPAELQQRYPMVLAYKVQPEQLERILRLAESYGLSRSQLIFTGFLTDDDLIALYNLCKLFVFPSLHEGFGLPPLEAMRCGAATLGSNITSLPEVIGWEDAMFNPHDVQDIRRVMEKALTDEAFYRELKAHALAQSAKFSWANTAHLAIEGFTRLLQSSQETDAGQAESVTASRLQMMQKIDALSEVDRLGLAWAVARNSFKRHTRKLLVDISVLAQHDAKTGIQRVSRSILSELLKSGVPGYEVSAVYYTPGECYRYANQYLSSHFPGEFGADEPVLFSKDDVLIATDLTAHLFPELVTQIDSMRAAGAFACFVVHDILPLRRPEWSIEGIQRDFPIWLSCLAEHADRLICVSASVAEDVKAWIAENRHWVKPNPLQTVSNFHLGADLDASVPSTGMPDNAQALLAAMAAAPSFIMVGTMEPRKGHAQTLAAFEELWREGKDYNLFIVGKQGWNVDSLCEKLRHHPQLNKKLFWLQNISDEFLAELYARSRALIFASQGEGFGLPLIEAAQKKLPVIIRDIPVFKEIAQEHAWYFSGEAPSDIAKAVEEWLALYEQNAHPRSENINWLTWKQSAEFLLKNLPIIAPAAKQ</sequence>
<evidence type="ECO:0000269" key="1">
    <source>
    </source>
</evidence>
<evidence type="ECO:0000269" key="2">
    <source>
    </source>
</evidence>
<evidence type="ECO:0000269" key="3">
    <source>
    </source>
</evidence>
<evidence type="ECO:0000269" key="4">
    <source>
    </source>
</evidence>
<evidence type="ECO:0000269" key="5">
    <source>
    </source>
</evidence>
<evidence type="ECO:0000303" key="6">
    <source>
    </source>
</evidence>
<evidence type="ECO:0000303" key="7">
    <source>
    </source>
</evidence>
<evidence type="ECO:0000305" key="8"/>
<evidence type="ECO:0000305" key="9">
    <source>
    </source>
</evidence>
<evidence type="ECO:0000305" key="10">
    <source>
    </source>
</evidence>
<name>WBDA_ECOLX</name>
<gene>
    <name evidence="6" type="primary">wbdA</name>
    <name evidence="7" type="synonym">mtfA</name>
</gene>
<keyword id="KW-0997">Cell inner membrane</keyword>
<keyword id="KW-1003">Cell membrane</keyword>
<keyword id="KW-0328">Glycosyltransferase</keyword>
<keyword id="KW-0448">Lipopolysaccharide biosynthesis</keyword>
<keyword id="KW-0472">Membrane</keyword>
<keyword id="KW-0677">Repeat</keyword>
<keyword id="KW-0808">Transferase</keyword>
<reference key="1">
    <citation type="journal article" date="2012" name="J. Biol. Chem.">
        <title>Biosynthesis of the polymannose lipopolysaccharide O-antigens from Escherichia coli serotypes O8 and O9a requires a unique combination of single- and multiple-active site mannosyltransferases.</title>
        <authorList>
            <person name="Greenfield L.K."/>
            <person name="Richards M.R."/>
            <person name="Li J."/>
            <person name="Wakarchuk W.W."/>
            <person name="Lowary T.L."/>
            <person name="Whitfield C."/>
        </authorList>
    </citation>
    <scope>NUCLEOTIDE SEQUENCE [GENOMIC DNA]</scope>
    <scope>FUNCTION</scope>
    <scope>CATALYTIC ACTIVITY</scope>
    <scope>PATHWAY</scope>
    <source>
        <strain>O9a</strain>
    </source>
</reference>
<reference key="2">
    <citation type="journal article" date="2012" name="J. Biol. Chem.">
        <title>Domain organization of the polymerizing mannosyltransferases involved in synthesis of the Escherichia coli O8 and O9a lipopolysaccharide O-antigens.</title>
        <authorList>
            <person name="Greenfield L.K."/>
            <person name="Richards M.R."/>
            <person name="Vinogradov E."/>
            <person name="Wakarchuk W.W."/>
            <person name="Lowary T.L."/>
            <person name="Whitfield C."/>
        </authorList>
    </citation>
    <scope>NUCLEOTIDE SEQUENCE [GENOMIC DNA]</scope>
    <scope>FUNCTION</scope>
    <scope>CATALYTIC ACTIVITY</scope>
    <scope>PATHWAY</scope>
    <scope>DOMAIN</scope>
    <scope>MUTAGENESIS OF GLU-317; GLU-325; GLU-750 AND GLU-758</scope>
    <source>
        <strain>O9a</strain>
    </source>
</reference>
<reference key="3">
    <citation type="journal article" date="2009" name="J. Biol. Chem.">
        <title>Coordination of polymerization, chain termination, and export in assembly of the Escherichia coli lipopolysaccharide O9a antigen in an ATP-binding cassette transporter-dependent pathway.</title>
        <authorList>
            <person name="Clarke B.R."/>
            <person name="Greenfield L.K."/>
            <person name="Bouwman C."/>
            <person name="Whitfield C."/>
        </authorList>
    </citation>
    <scope>FUNCTION</scope>
    <scope>SUBCELLULAR LOCATION</scope>
    <scope>INTERACTION WITH WBDD</scope>
    <source>
        <strain>O9a:K30:H12 / E69</strain>
    </source>
</reference>
<reference key="4">
    <citation type="journal article" date="2014" name="Proc. Natl. Acad. Sci. U.S.A.">
        <title>Lipopolysaccharide O antigen size distribution is determined by a chain extension complex of variable stoichiometry in Escherichia coli O9a.</title>
        <authorList>
            <person name="King J.D."/>
            <person name="Berry S."/>
            <person name="Clarke B.R."/>
            <person name="Morris R.J."/>
            <person name="Whitfield C."/>
        </authorList>
    </citation>
    <scope>ACTIVITY REGULATION</scope>
    <source>
        <strain>O9a:K30:H12 / E69</strain>
    </source>
</reference>
<reference key="5">
    <citation type="journal article" date="2015" name="J. Biol. Chem.">
        <title>Domain interactions control complex formation and polymerase specificity in the biosynthesis of the Escherichia coli O9a antigen.</title>
        <authorList>
            <person name="Liston S.D."/>
            <person name="Clarke B.R."/>
            <person name="Greenfield L.K."/>
            <person name="Richards M.R."/>
            <person name="Lowary T.L."/>
            <person name="Whitfield C."/>
        </authorList>
    </citation>
    <scope>FUNCTION</scope>
    <scope>CATALYTIC ACTIVITY</scope>
    <scope>ACTIVITY REGULATION</scope>
    <scope>SUBUNIT</scope>
    <scope>INTERACTION WITH WBDD</scope>
    <scope>DOMAIN</scope>
    <scope>MUTAGENESIS OF GLU-317</scope>
    <source>
        <strain>O9a:K-</strain>
    </source>
</reference>
<comment type="function">
    <text evidence="1 2 3 5">Mannosyltransferase involved in the biosynthesis of the repeat unit of the lipopolysaccharide (LPS) O-antigen region (PubMed:19734145, PubMed:22875852, PubMed:22989876, PubMed:25422321). Catalyzes the polymerization of a tetrasaccharide repeat unit containing two alpha-(1-&gt;3)- and two alpha-(1-&gt;2)-linked mannopyranose residues (PubMed:22875852, PubMed:22989876, PubMed:25422321). Extension is terminated by the action of the chain terminator bifunctional methyltransferase/kinase WbdD (PubMed:19734145).</text>
</comment>
<comment type="catalytic activity">
    <reaction evidence="2 3 5">
        <text>[alpha-D-Man-(1-&gt;3)-alpha-D-Man-(1-&gt;3)-alpha-D-Man-(1-&gt;2)-alpha-D-Man-(1-&gt;2)](n)-alpha-D-Man-(1-&gt;3)-alpha-D-Man-(1-&gt;3)-alpha-D-Man-(1-&gt;3)-alpha-D-GlcNAc-di-trans,octa-cis-undecaprenyl diphosphate + 2 GDP-alpha-D-mannose = alpha-D-Man-(1-&gt;2)-alpha-D-Man-(1-&gt;2)-[alpha-D-Man-(1-&gt;3)-alpha-D-Man-(1-&gt;3)-alpha-D-Man-(1-&gt;2)-alpha-D-Man-(1-&gt;2)](n)-alpha-D-Man-(1-&gt;3)-alpha-D-Man-(1-&gt;3)-alpha-D-Man-(1-&gt;3)-alpha-D-GlcNAc-di-trans,octa-cis-undecaprenyl diphosphate + 2 GDP + 2 H(+)</text>
        <dbReference type="Rhea" id="RHEA:13789"/>
        <dbReference type="Rhea" id="RHEA-COMP:9558"/>
        <dbReference type="Rhea" id="RHEA-COMP:14053"/>
        <dbReference type="ChEBI" id="CHEBI:15378"/>
        <dbReference type="ChEBI" id="CHEBI:57527"/>
        <dbReference type="ChEBI" id="CHEBI:58189"/>
        <dbReference type="ChEBI" id="CHEBI:74010"/>
        <dbReference type="ChEBI" id="CHEBI:138439"/>
        <dbReference type="EC" id="2.4.1.371"/>
    </reaction>
    <physiologicalReaction direction="left-to-right" evidence="2 3 5">
        <dbReference type="Rhea" id="RHEA:13790"/>
    </physiologicalReaction>
</comment>
<comment type="catalytic activity">
    <reaction evidence="2 3 5">
        <text>alpha-D-Man-(1-&gt;2)-alpha-D-Man-(1-&gt;2)-[alpha-D-Man-(1-&gt;3)-alpha-D-Man-(1-&gt;3)-alpha-D-Man-(1-&gt;2)-alpha-D-Man-(1-&gt;2)](n)-alpha-D-Man-(1-&gt;3)-alpha-D-Man-(1-&gt;3)-alpha-D-Man-(1-&gt;3)-alpha-D-GlcNAc-di-trans,octa-cis-undecaprenyl diphosphate + 2 GDP-alpha-D-mannose = [alpha-D-Man-(1-&gt;3)-alpha-D-Man-(1-&gt;3)-alpha-D-Man-(1-&gt;2)-alpha-D-Man-(1-&gt;2)](n+1)-alpha-D-Man-(1-&gt;3)-alpha-D-Man-(1-&gt;3)-alpha-D-Man-(1-&gt;3)-alpha-D-GlcNAc-di-trans,octa-cis-undecaprenyl diphosphate + 2 GDP + 2 H(+)</text>
        <dbReference type="Rhea" id="RHEA:54980"/>
        <dbReference type="Rhea" id="RHEA-COMP:9558"/>
        <dbReference type="Rhea" id="RHEA-COMP:14055"/>
        <dbReference type="ChEBI" id="CHEBI:15378"/>
        <dbReference type="ChEBI" id="CHEBI:57527"/>
        <dbReference type="ChEBI" id="CHEBI:58189"/>
        <dbReference type="ChEBI" id="CHEBI:74010"/>
        <dbReference type="ChEBI" id="CHEBI:138439"/>
        <dbReference type="EC" id="2.4.1.371"/>
    </reaction>
    <physiologicalReaction direction="left-to-right" evidence="2 3 5">
        <dbReference type="Rhea" id="RHEA:54981"/>
    </physiologicalReaction>
</comment>
<comment type="activity regulation">
    <text evidence="4 5">The alpha-(1-&gt;2)-mannosyltransferase activity of the N-terminal domain is regulated by the activity of the C-terminal alpha-(1-&gt;3)-mannosyltransferase (PubMed:25422321). The relative concentration of WbdA and WbdD is critical in determining the O polysaccharide (OPS) modal chain length (PubMed:24733938). OPS chain length increases with increasing concentration of WbdA, but the maximum length does not increase beyond the wild-type modal length, despite substantial increases in WbdA concentration (PubMed:24733938).</text>
</comment>
<comment type="pathway">
    <text evidence="2 3">Bacterial outer membrane biogenesis; LPS O-antigen biosynthesis.</text>
</comment>
<comment type="subunit">
    <text evidence="1 5">Monomer (PubMed:25422321). Interacts with the C-terminal region of WbdD (PubMed:19734145, PubMed:25422321). Interacts with WbdD via a surface-exposed alpha-helix in the C-terminal mannosyltransferase domain (PubMed:25422321). However, the C-terminal domain is unable to interact with WbdD in the absence of its N-terminal partner (PubMed:25422321).</text>
</comment>
<comment type="subcellular location">
    <subcellularLocation>
        <location evidence="1">Cell inner membrane</location>
        <topology evidence="1">Peripheral membrane protein</topology>
    </subcellularLocation>
    <text evidence="1">Proper localization requires WbdD.</text>
</comment>
<comment type="domain">
    <text evidence="3 5">Contains two separable and functional domains (PubMed:22989876). In vitro, the purified N-terminal domain possesses alpha-(1-&gt;2)-mannosyltransferase activity, and transfers multiple mannose residues to a synthetic acceptor to create alpha-(1-&gt;2)-linked polymannose (PubMed:22989876). The C-terminal domain shows alpha-(1-&gt;3)-mannosyltransferase activity (PubMed:25422321).</text>
</comment>
<comment type="miscellaneous">
    <text evidence="2">This enzyme is specific for the E.coli serotype O9a O-antigen.</text>
</comment>
<comment type="similarity">
    <text evidence="8">Belongs to the glycosyltransferase group 1 family. Glycosyltransferase 4 subfamily.</text>
</comment>
<comment type="caution">
    <text evidence="8">The N-terminus is longer than in orthologs.</text>
</comment>
<accession>M4QN28</accession>
<feature type="chain" id="PRO_0000459432" description="Serotype-specific mannosyltransferase WbdA">
    <location>
        <begin position="1"/>
        <end position="840"/>
    </location>
</feature>
<feature type="region of interest" description="Alpha-(1-&gt;2)-mannosyltransferase" evidence="9 10">
    <location>
        <begin position="2"/>
        <end position="399"/>
    </location>
</feature>
<feature type="region of interest" description="Alpha-(1-&gt;3)-mannosyltransferase" evidence="9 10">
    <location>
        <begin position="456"/>
        <end position="829"/>
    </location>
</feature>
<feature type="mutagenesis site" description="Can form alpha-(1-3) linkages. Cannot support biosynthesis of O-polysaccharide." evidence="3 5">
    <original>E</original>
    <variation>A</variation>
    <location>
        <position position="317"/>
    </location>
</feature>
<feature type="mutagenesis site" description="Cannot support biosynthesis of O-polysaccharide." evidence="3">
    <original>E</original>
    <variation>A</variation>
    <location>
        <position position="325"/>
    </location>
</feature>
<feature type="mutagenesis site" description="Produces an altered O-polysaccharide repeat unit consisting of only alpha-(1-2) linkages." evidence="3">
    <original>E</original>
    <variation>A</variation>
    <location>
        <position position="750"/>
    </location>
</feature>
<feature type="mutagenesis site" description="Produces an altered O-polysaccharide repeat unit consisting of only alpha-(1-2) linkages." evidence="3">
    <original>E</original>
    <variation>A</variation>
    <location>
        <position position="758"/>
    </location>
</feature>
<dbReference type="EC" id="2.4.1.371" evidence="2 3 5"/>
<dbReference type="EMBL" id="KC329753">
    <property type="protein sequence ID" value="AGH30276.1"/>
    <property type="molecule type" value="Genomic_DNA"/>
</dbReference>
<dbReference type="SMR" id="M4QN28"/>
<dbReference type="KEGG" id="ag:AGH30276"/>
<dbReference type="UniPathway" id="UPA00281"/>
<dbReference type="GO" id="GO:0005886">
    <property type="term" value="C:plasma membrane"/>
    <property type="evidence" value="ECO:0007669"/>
    <property type="project" value="UniProtKB-SubCell"/>
</dbReference>
<dbReference type="GO" id="GO:0016757">
    <property type="term" value="F:glycosyltransferase activity"/>
    <property type="evidence" value="ECO:0007669"/>
    <property type="project" value="UniProtKB-KW"/>
</dbReference>
<dbReference type="GO" id="GO:0009243">
    <property type="term" value="P:O antigen biosynthetic process"/>
    <property type="evidence" value="ECO:0007669"/>
    <property type="project" value="UniProtKB-UniPathway"/>
</dbReference>
<dbReference type="CDD" id="cd03809">
    <property type="entry name" value="GT4_MtfB-like"/>
    <property type="match status" value="2"/>
</dbReference>
<dbReference type="Gene3D" id="3.40.50.2000">
    <property type="entry name" value="Glycogen Phosphorylase B"/>
    <property type="match status" value="3"/>
</dbReference>
<dbReference type="InterPro" id="IPR001296">
    <property type="entry name" value="Glyco_trans_1"/>
</dbReference>
<dbReference type="PANTHER" id="PTHR46401">
    <property type="entry name" value="GLYCOSYLTRANSFERASE WBBK-RELATED"/>
    <property type="match status" value="1"/>
</dbReference>
<dbReference type="PANTHER" id="PTHR46401:SF2">
    <property type="entry name" value="GLYCOSYLTRANSFERASE WBBK-RELATED"/>
    <property type="match status" value="1"/>
</dbReference>
<dbReference type="Pfam" id="PF00534">
    <property type="entry name" value="Glycos_transf_1"/>
    <property type="match status" value="2"/>
</dbReference>
<dbReference type="SUPFAM" id="SSF53756">
    <property type="entry name" value="UDP-Glycosyltransferase/glycogen phosphorylase"/>
    <property type="match status" value="2"/>
</dbReference>